<comment type="function">
    <text evidence="1 2 3 8">Member of the two-component regulatory system WalK/WalR that regulates genes involved in cell wall metabolism (By similarity). Binds to the promoter region of the transcription factor fabT gene in the fabTH-acp operon in vitro (By similarity). Inhibits transcription of fabT, probably acting in an unphosphorylated form, thereby playing a role in the regulation of fatty acid biosynthesis (By similarity). Essential for normal growth in vitro (By similarity). Required for maintaining normal cellular morphology, acting, at least in part, by regulating peptidoglycan hydrolase pcsB (By similarity). Involved in maintaining expression of WalRK regulon genes in exponentially growing cells (PubMed:23013245).</text>
</comment>
<comment type="subunit">
    <text evidence="1">Monomer. Homodimer.</text>
</comment>
<comment type="subcellular location">
    <subcellularLocation>
        <location evidence="7">Cytoplasm</location>
    </subcellularLocation>
    <text evidence="7">Localized to cytoplasm around nucleoids in exponentially growing cells.</text>
</comment>
<comment type="PTM">
    <text evidence="6 8">Phosphorylated by WalK; can also be dephosphorylated by WalK.</text>
</comment>
<comment type="miscellaneous">
    <text evidence="7">Present in about 6200 monomers per cell in cultures growing exponentially.</text>
</comment>
<comment type="miscellaneous">
    <text evidence="3">Part of a walR-walK-walJ operon.</text>
</comment>
<dbReference type="EMBL" id="CP000410">
    <property type="protein sequence ID" value="ABJ53946.1"/>
    <property type="molecule type" value="Genomic_DNA"/>
</dbReference>
<dbReference type="RefSeq" id="WP_000722076.1">
    <property type="nucleotide sequence ID" value="NZ_JAMLJR010000006.1"/>
</dbReference>
<dbReference type="SMR" id="A0A0H2ZN37"/>
<dbReference type="PaxDb" id="373153-SPD_1085"/>
<dbReference type="GeneID" id="45653482"/>
<dbReference type="KEGG" id="spd:SPD_1085"/>
<dbReference type="eggNOG" id="COG0745">
    <property type="taxonomic scope" value="Bacteria"/>
</dbReference>
<dbReference type="HOGENOM" id="CLU_000445_30_4_9"/>
<dbReference type="BioCyc" id="SPNE373153:G1G6V-1176-MONOMER"/>
<dbReference type="Proteomes" id="UP000001452">
    <property type="component" value="Chromosome"/>
</dbReference>
<dbReference type="GO" id="GO:0005829">
    <property type="term" value="C:cytosol"/>
    <property type="evidence" value="ECO:0007669"/>
    <property type="project" value="TreeGrafter"/>
</dbReference>
<dbReference type="GO" id="GO:0032993">
    <property type="term" value="C:protein-DNA complex"/>
    <property type="evidence" value="ECO:0007669"/>
    <property type="project" value="TreeGrafter"/>
</dbReference>
<dbReference type="GO" id="GO:0000156">
    <property type="term" value="F:phosphorelay response regulator activity"/>
    <property type="evidence" value="ECO:0007669"/>
    <property type="project" value="TreeGrafter"/>
</dbReference>
<dbReference type="GO" id="GO:0000976">
    <property type="term" value="F:transcription cis-regulatory region binding"/>
    <property type="evidence" value="ECO:0007669"/>
    <property type="project" value="TreeGrafter"/>
</dbReference>
<dbReference type="GO" id="GO:0006355">
    <property type="term" value="P:regulation of DNA-templated transcription"/>
    <property type="evidence" value="ECO:0007669"/>
    <property type="project" value="InterPro"/>
</dbReference>
<dbReference type="CDD" id="cd17614">
    <property type="entry name" value="REC_OmpR_YycF-like"/>
    <property type="match status" value="1"/>
</dbReference>
<dbReference type="CDD" id="cd00383">
    <property type="entry name" value="trans_reg_C"/>
    <property type="match status" value="1"/>
</dbReference>
<dbReference type="FunFam" id="1.10.10.10:FF:000089">
    <property type="entry name" value="Alkaline phosphatase synthesis response regulator"/>
    <property type="match status" value="1"/>
</dbReference>
<dbReference type="FunFam" id="3.40.50.2300:FF:000052">
    <property type="entry name" value="DNA-binding response regulator YycF"/>
    <property type="match status" value="1"/>
</dbReference>
<dbReference type="Gene3D" id="3.40.50.2300">
    <property type="match status" value="1"/>
</dbReference>
<dbReference type="Gene3D" id="6.10.250.690">
    <property type="match status" value="1"/>
</dbReference>
<dbReference type="Gene3D" id="1.10.10.10">
    <property type="entry name" value="Winged helix-like DNA-binding domain superfamily/Winged helix DNA-binding domain"/>
    <property type="match status" value="1"/>
</dbReference>
<dbReference type="InterPro" id="IPR011006">
    <property type="entry name" value="CheY-like_superfamily"/>
</dbReference>
<dbReference type="InterPro" id="IPR001867">
    <property type="entry name" value="OmpR/PhoB-type_DNA-bd"/>
</dbReference>
<dbReference type="InterPro" id="IPR047791">
    <property type="entry name" value="Resp_reg_WalR"/>
</dbReference>
<dbReference type="InterPro" id="IPR016032">
    <property type="entry name" value="Sig_transdc_resp-reg_C-effctor"/>
</dbReference>
<dbReference type="InterPro" id="IPR001789">
    <property type="entry name" value="Sig_transdc_resp-reg_receiver"/>
</dbReference>
<dbReference type="InterPro" id="IPR039420">
    <property type="entry name" value="WalR-like"/>
</dbReference>
<dbReference type="InterPro" id="IPR036388">
    <property type="entry name" value="WH-like_DNA-bd_sf"/>
</dbReference>
<dbReference type="NCBIfam" id="NF040534">
    <property type="entry name" value="resp_reg_YycF"/>
    <property type="match status" value="1"/>
</dbReference>
<dbReference type="PANTHER" id="PTHR48111:SF40">
    <property type="entry name" value="PHOSPHATE REGULON TRANSCRIPTIONAL REGULATORY PROTEIN PHOB"/>
    <property type="match status" value="1"/>
</dbReference>
<dbReference type="PANTHER" id="PTHR48111">
    <property type="entry name" value="REGULATOR OF RPOS"/>
    <property type="match status" value="1"/>
</dbReference>
<dbReference type="Pfam" id="PF00072">
    <property type="entry name" value="Response_reg"/>
    <property type="match status" value="1"/>
</dbReference>
<dbReference type="Pfam" id="PF00486">
    <property type="entry name" value="Trans_reg_C"/>
    <property type="match status" value="1"/>
</dbReference>
<dbReference type="SMART" id="SM00448">
    <property type="entry name" value="REC"/>
    <property type="match status" value="1"/>
</dbReference>
<dbReference type="SMART" id="SM00862">
    <property type="entry name" value="Trans_reg_C"/>
    <property type="match status" value="1"/>
</dbReference>
<dbReference type="SUPFAM" id="SSF46894">
    <property type="entry name" value="C-terminal effector domain of the bipartite response regulators"/>
    <property type="match status" value="1"/>
</dbReference>
<dbReference type="SUPFAM" id="SSF52172">
    <property type="entry name" value="CheY-like"/>
    <property type="match status" value="1"/>
</dbReference>
<dbReference type="PROSITE" id="PS51755">
    <property type="entry name" value="OMPR_PHOB"/>
    <property type="match status" value="1"/>
</dbReference>
<dbReference type="PROSITE" id="PS50110">
    <property type="entry name" value="RESPONSE_REGULATORY"/>
    <property type="match status" value="1"/>
</dbReference>
<protein>
    <recommendedName>
        <fullName evidence="10">Transcriptional regulatory protein WalR</fullName>
    </recommendedName>
</protein>
<feature type="chain" id="PRO_0000459006" description="Transcriptional regulatory protein WalR">
    <location>
        <begin position="1"/>
        <end position="234"/>
    </location>
</feature>
<feature type="domain" description="Response regulatory" evidence="4">
    <location>
        <begin position="3"/>
        <end position="116"/>
    </location>
</feature>
<feature type="DNA-binding region" description="OmpR/PhoB-type" evidence="5">
    <location>
        <begin position="133"/>
        <end position="232"/>
    </location>
</feature>
<feature type="modified residue" description="4-aspartylphosphate" evidence="4">
    <location>
        <position position="52"/>
    </location>
</feature>
<keyword id="KW-0963">Cytoplasm</keyword>
<keyword id="KW-0238">DNA-binding</keyword>
<keyword id="KW-0597">Phosphoprotein</keyword>
<keyword id="KW-1185">Reference proteome</keyword>
<keyword id="KW-0804">Transcription</keyword>
<keyword id="KW-0805">Transcription regulation</keyword>
<keyword id="KW-0902">Two-component regulatory system</keyword>
<gene>
    <name evidence="9" type="primary">walR</name>
    <name evidence="1" type="synonym">rr02</name>
    <name evidence="9" type="synonym">vicR</name>
    <name evidence="9" type="synonym">yycF</name>
    <name evidence="11" type="ordered locus">SPD_1085</name>
</gene>
<proteinExistence type="evidence at protein level"/>
<sequence length="234" mass="26816">MKKILIVDDEKPISDIIKFNMTKEGYEVVTAFNGREALEQFEAEQPDIIILDLMLPEIDGLEVAKTIRKTSSVPILMLSAKDSEFDKVIGLELGADDYVTKPFSNRELQARVKALLRRSQPMPVDGQEADSKPQPIQIGDLEIVPDAYVAKKYGEELDLTHREFELLYHLASHTGQVITREHLLETVWGYDYFGDVRTVDVTVRRLREKIEDTPSRPEYILTRRGVGYYMRNNA</sequence>
<accession>A0A0H2ZN37</accession>
<evidence type="ECO:0000250" key="1">
    <source>
        <dbReference type="UniProtKB" id="A0A0H2UQ68"/>
    </source>
</evidence>
<evidence type="ECO:0000250" key="2">
    <source>
        <dbReference type="UniProtKB" id="P37478"/>
    </source>
</evidence>
<evidence type="ECO:0000250" key="3">
    <source>
        <dbReference type="UniProtKB" id="Q8DPL7"/>
    </source>
</evidence>
<evidence type="ECO:0000255" key="4">
    <source>
        <dbReference type="PROSITE-ProRule" id="PRU00169"/>
    </source>
</evidence>
<evidence type="ECO:0000255" key="5">
    <source>
        <dbReference type="PROSITE-ProRule" id="PRU01091"/>
    </source>
</evidence>
<evidence type="ECO:0000269" key="6">
    <source>
    </source>
</evidence>
<evidence type="ECO:0000269" key="7">
    <source>
    </source>
</evidence>
<evidence type="ECO:0000269" key="8">
    <source>
    </source>
</evidence>
<evidence type="ECO:0000303" key="9">
    <source>
    </source>
</evidence>
<evidence type="ECO:0000305" key="10"/>
<evidence type="ECO:0000312" key="11">
    <source>
        <dbReference type="EMBL" id="ABJ53946.1"/>
    </source>
</evidence>
<evidence type="ECO:0000312" key="12">
    <source>
        <dbReference type="Proteomes" id="UP000001452"/>
    </source>
</evidence>
<name>WALR_STRP2</name>
<organism evidence="12">
    <name type="scientific">Streptococcus pneumoniae serotype 2 (strain D39 / NCTC 7466)</name>
    <dbReference type="NCBI Taxonomy" id="373153"/>
    <lineage>
        <taxon>Bacteria</taxon>
        <taxon>Bacillati</taxon>
        <taxon>Bacillota</taxon>
        <taxon>Bacilli</taxon>
        <taxon>Lactobacillales</taxon>
        <taxon>Streptococcaceae</taxon>
        <taxon>Streptococcus</taxon>
    </lineage>
</organism>
<reference evidence="12" key="1">
    <citation type="journal article" date="2007" name="J. Bacteriol.">
        <title>Genome sequence of Avery's virulent serotype 2 strain D39 of Streptococcus pneumoniae and comparison with that of unencapsulated laboratory strain R6.</title>
        <authorList>
            <person name="Lanie J.A."/>
            <person name="Ng W.-L."/>
            <person name="Kazmierczak K.M."/>
            <person name="Andrzejewski T.M."/>
            <person name="Davidsen T.M."/>
            <person name="Wayne K.J."/>
            <person name="Tettelin H."/>
            <person name="Glass J.I."/>
            <person name="Winkler M.E."/>
        </authorList>
    </citation>
    <scope>NUCLEOTIDE SEQUENCE [LARGE SCALE GENOMIC DNA]</scope>
    <source>
        <strain evidence="12">D39 / NCTC 7466</strain>
    </source>
</reference>
<reference evidence="10" key="2">
    <citation type="journal article" date="2010" name="J. Bacteriol.">
        <title>Kinetic characterization of the WalRKSpn (VicRK) two-component system of Streptococcus pneumoniae: dependence of WalKSpn (VicK) phosphatase activity on its PAS domain.</title>
        <authorList>
            <person name="Gutu A.D."/>
            <person name="Wayne K.J."/>
            <person name="Sham L.T."/>
            <person name="Winkler M.E."/>
        </authorList>
    </citation>
    <scope>PHOSPHORYLATION</scope>
</reference>
<reference evidence="10" key="3">
    <citation type="journal article" date="2010" name="J. Bacteriol.">
        <title>Localization and cellular amounts of the WalRKJ (VicRKX) two-component regulatory system proteins in serotype 2 Streptococcus pneumoniae.</title>
        <authorList>
            <person name="Wayne K.J."/>
            <person name="Sham L.T."/>
            <person name="Tsui H.C."/>
            <person name="Gutu A.D."/>
            <person name="Barendt S.M."/>
            <person name="Keen S.K."/>
            <person name="Winkler M.E."/>
        </authorList>
    </citation>
    <scope>SUBCELLULAR LOCATION</scope>
    <scope>LEVEL OF PROTEIN EXPRESSION</scope>
</reference>
<reference evidence="10" key="4">
    <citation type="journal article" date="2012" name="Mol. Microbiol.">
        <title>Involvement of WalK (VicK) phosphatase activity in setting WalR (VicR) response regulator phosphorylation level and limiting cross-talk in Streptococcus pneumoniae D39 cells.</title>
        <authorList>
            <person name="Wayne K.J."/>
            <person name="Li S."/>
            <person name="Kazmierczak K.M."/>
            <person name="Tsui H.C."/>
            <person name="Winkler M.E."/>
        </authorList>
    </citation>
    <scope>FUNCTION</scope>
    <scope>PHOSPHORYLATION</scope>
</reference>